<sequence length="452" mass="49622">MRRALGTLGCCLALLLPLLPAARGVPHRHRRQPLGSGLGRHGAADTACKNRPLDLVFIIDSSRSVRPEEFEKVKIFLSKMIDTLDVGERTTRVAVMNYASTVKVEFPLRTYFDKASMKEAVSRIQPLSAGTMTGLAIQAAMDEVFTEEMGTRPANFNIPKVVIIVTDGRPQDQVENVAANARTAGIEIYAVGVGRADMQSLRIMASEPLDEHVFYVETYGVIEKLTSKFRETFCAANTCALGTHDCEQVCVSNDGSYLCDCYEGYTLNPDKRTCSAVDVCAPGRHECDQICVSNNGSYVCECFEGYTLNPDKKTCSAMDVCAPGRHDCAQVCRRNGGSYSCDCFEGFTLNPDKKTCSAVDVCAPGRHDCEQVCVRDDLFYTCDCYQGYVLNPDKKTCSRATTSSLVTDEEACKCEAIAALQDSVTSRLEALSTKLDEVSQKLQAYQDRQQVV</sequence>
<gene>
    <name type="primary">MATN3</name>
</gene>
<name>MATN3_CHICK</name>
<reference key="1">
    <citation type="journal article" date="1997" name="FEBS Lett.">
        <title>Matrilin-3 from chicken cartilage.</title>
        <authorList>
            <person name="Belluoccio D."/>
            <person name="Trueb B."/>
        </authorList>
    </citation>
    <scope>NUCLEOTIDE SEQUENCE [MRNA]</scope>
    <source>
        <tissue>Cartilage</tissue>
    </source>
</reference>
<evidence type="ECO:0000250" key="1"/>
<evidence type="ECO:0000255" key="2"/>
<evidence type="ECO:0000255" key="3">
    <source>
        <dbReference type="PROSITE-ProRule" id="PRU00219"/>
    </source>
</evidence>
<feature type="signal peptide" evidence="2">
    <location>
        <begin position="1"/>
        <end position="24"/>
    </location>
</feature>
<feature type="chain" id="PRO_0000007659" description="Matrilin-3">
    <location>
        <begin position="25"/>
        <end position="452"/>
    </location>
</feature>
<feature type="domain" description="VWFA" evidence="3">
    <location>
        <begin position="54"/>
        <end position="229"/>
    </location>
</feature>
<feature type="domain" description="EGF-like 1">
    <location>
        <begin position="235"/>
        <end position="275"/>
    </location>
</feature>
<feature type="domain" description="EGF-like 2">
    <location>
        <begin position="276"/>
        <end position="316"/>
    </location>
</feature>
<feature type="domain" description="EGF-like 3">
    <location>
        <begin position="317"/>
        <end position="357"/>
    </location>
</feature>
<feature type="domain" description="EGF-like 4">
    <location>
        <begin position="358"/>
        <end position="398"/>
    </location>
</feature>
<feature type="coiled-coil region" evidence="2">
    <location>
        <begin position="419"/>
        <end position="451"/>
    </location>
</feature>
<feature type="glycosylation site" description="N-linked (GlcNAc...) asparagine" evidence="2">
    <location>
        <position position="295"/>
    </location>
</feature>
<feature type="disulfide bond" evidence="1">
    <location>
        <begin position="239"/>
        <end position="250"/>
    </location>
</feature>
<feature type="disulfide bond" evidence="1">
    <location>
        <begin position="246"/>
        <end position="259"/>
    </location>
</feature>
<feature type="disulfide bond" evidence="1">
    <location>
        <begin position="261"/>
        <end position="274"/>
    </location>
</feature>
<feature type="disulfide bond" evidence="1">
    <location>
        <begin position="280"/>
        <end position="291"/>
    </location>
</feature>
<feature type="disulfide bond" evidence="1">
    <location>
        <begin position="287"/>
        <end position="300"/>
    </location>
</feature>
<feature type="disulfide bond" evidence="1">
    <location>
        <begin position="302"/>
        <end position="315"/>
    </location>
</feature>
<feature type="disulfide bond" evidence="1">
    <location>
        <begin position="321"/>
        <end position="332"/>
    </location>
</feature>
<feature type="disulfide bond" evidence="1">
    <location>
        <begin position="328"/>
        <end position="341"/>
    </location>
</feature>
<feature type="disulfide bond" evidence="1">
    <location>
        <begin position="343"/>
        <end position="356"/>
    </location>
</feature>
<feature type="disulfide bond" evidence="1">
    <location>
        <begin position="362"/>
        <end position="373"/>
    </location>
</feature>
<feature type="disulfide bond" evidence="1">
    <location>
        <begin position="369"/>
        <end position="382"/>
    </location>
</feature>
<feature type="disulfide bond" evidence="1">
    <location>
        <begin position="384"/>
        <end position="397"/>
    </location>
</feature>
<dbReference type="EMBL" id="AJ000055">
    <property type="protein sequence ID" value="CAA03885.1"/>
    <property type="molecule type" value="mRNA"/>
</dbReference>
<dbReference type="RefSeq" id="NP_990403.1">
    <property type="nucleotide sequence ID" value="NM_205072.1"/>
</dbReference>
<dbReference type="SMR" id="O42401"/>
<dbReference type="STRING" id="9031.ENSGALP00000036079"/>
<dbReference type="GlyCosmos" id="O42401">
    <property type="glycosylation" value="1 site, No reported glycans"/>
</dbReference>
<dbReference type="GlyGen" id="O42401">
    <property type="glycosylation" value="1 site"/>
</dbReference>
<dbReference type="PaxDb" id="9031-ENSGALP00000036079"/>
<dbReference type="GeneID" id="395954"/>
<dbReference type="KEGG" id="gga:395954"/>
<dbReference type="CTD" id="4148"/>
<dbReference type="VEuPathDB" id="HostDB:geneid_395954"/>
<dbReference type="eggNOG" id="KOG1217">
    <property type="taxonomic scope" value="Eukaryota"/>
</dbReference>
<dbReference type="HOGENOM" id="CLU_008905_6_1_1"/>
<dbReference type="InParanoid" id="O42401"/>
<dbReference type="OrthoDB" id="6022609at2759"/>
<dbReference type="PhylomeDB" id="O42401"/>
<dbReference type="Reactome" id="R-GGA-3000178">
    <property type="pathway name" value="ECM proteoglycans"/>
</dbReference>
<dbReference type="Reactome" id="R-GGA-381426">
    <property type="pathway name" value="Regulation of Insulin-like Growth Factor (IGF) transport and uptake by Insulin-like Growth Factor Binding Proteins (IGFBPs)"/>
</dbReference>
<dbReference type="Reactome" id="R-GGA-8957275">
    <property type="pathway name" value="Post-translational protein phosphorylation"/>
</dbReference>
<dbReference type="PRO" id="PR:O42401"/>
<dbReference type="Proteomes" id="UP000000539">
    <property type="component" value="Chromosome 3"/>
</dbReference>
<dbReference type="Bgee" id="ENSGALG00000016478">
    <property type="expression patterns" value="Expressed in testis and 7 other cell types or tissues"/>
</dbReference>
<dbReference type="GO" id="GO:0062023">
    <property type="term" value="C:collagen-containing extracellular matrix"/>
    <property type="evidence" value="ECO:0000318"/>
    <property type="project" value="GO_Central"/>
</dbReference>
<dbReference type="GO" id="GO:0005576">
    <property type="term" value="C:extracellular region"/>
    <property type="evidence" value="ECO:0007669"/>
    <property type="project" value="UniProtKB-SubCell"/>
</dbReference>
<dbReference type="GO" id="GO:0005509">
    <property type="term" value="F:calcium ion binding"/>
    <property type="evidence" value="ECO:0007669"/>
    <property type="project" value="InterPro"/>
</dbReference>
<dbReference type="FunFam" id="3.40.50.410:FF:000018">
    <property type="entry name" value="Matrilin 1"/>
    <property type="match status" value="1"/>
</dbReference>
<dbReference type="FunFam" id="2.10.25.10:FF:000126">
    <property type="entry name" value="Matrilin 3"/>
    <property type="match status" value="1"/>
</dbReference>
<dbReference type="FunFam" id="2.10.25.10:FF:000871">
    <property type="entry name" value="Matrilin 3"/>
    <property type="match status" value="3"/>
</dbReference>
<dbReference type="FunFam" id="1.20.5.30:FF:000005">
    <property type="entry name" value="Matrilin 3b"/>
    <property type="match status" value="1"/>
</dbReference>
<dbReference type="Gene3D" id="1.20.5.30">
    <property type="match status" value="1"/>
</dbReference>
<dbReference type="Gene3D" id="2.10.25.10">
    <property type="entry name" value="Laminin"/>
    <property type="match status" value="4"/>
</dbReference>
<dbReference type="Gene3D" id="3.40.50.410">
    <property type="entry name" value="von Willebrand factor, type A domain"/>
    <property type="match status" value="1"/>
</dbReference>
<dbReference type="InterPro" id="IPR026823">
    <property type="entry name" value="cEGF"/>
</dbReference>
<dbReference type="InterPro" id="IPR050525">
    <property type="entry name" value="ECM_Assembly_Org"/>
</dbReference>
<dbReference type="InterPro" id="IPR001881">
    <property type="entry name" value="EGF-like_Ca-bd_dom"/>
</dbReference>
<dbReference type="InterPro" id="IPR000742">
    <property type="entry name" value="EGF-like_dom"/>
</dbReference>
<dbReference type="InterPro" id="IPR009030">
    <property type="entry name" value="Growth_fac_rcpt_cys_sf"/>
</dbReference>
<dbReference type="InterPro" id="IPR036337">
    <property type="entry name" value="Matrilin_cc_sf"/>
</dbReference>
<dbReference type="InterPro" id="IPR019466">
    <property type="entry name" value="Matrilin_coiled-coil_trimer"/>
</dbReference>
<dbReference type="InterPro" id="IPR002035">
    <property type="entry name" value="VWF_A"/>
</dbReference>
<dbReference type="InterPro" id="IPR036465">
    <property type="entry name" value="vWFA_dom_sf"/>
</dbReference>
<dbReference type="PANTHER" id="PTHR24020">
    <property type="entry name" value="COLLAGEN ALPHA"/>
    <property type="match status" value="1"/>
</dbReference>
<dbReference type="PANTHER" id="PTHR24020:SF12">
    <property type="entry name" value="MATRILIN-3"/>
    <property type="match status" value="1"/>
</dbReference>
<dbReference type="Pfam" id="PF12662">
    <property type="entry name" value="cEGF"/>
    <property type="match status" value="2"/>
</dbReference>
<dbReference type="Pfam" id="PF14670">
    <property type="entry name" value="FXa_inhibition"/>
    <property type="match status" value="1"/>
</dbReference>
<dbReference type="Pfam" id="PF10393">
    <property type="entry name" value="Matrilin_ccoil"/>
    <property type="match status" value="1"/>
</dbReference>
<dbReference type="Pfam" id="PF00092">
    <property type="entry name" value="VWA"/>
    <property type="match status" value="1"/>
</dbReference>
<dbReference type="PRINTS" id="PR00453">
    <property type="entry name" value="VWFADOMAIN"/>
</dbReference>
<dbReference type="SMART" id="SM00181">
    <property type="entry name" value="EGF"/>
    <property type="match status" value="4"/>
</dbReference>
<dbReference type="SMART" id="SM00179">
    <property type="entry name" value="EGF_CA"/>
    <property type="match status" value="4"/>
</dbReference>
<dbReference type="SMART" id="SM01279">
    <property type="entry name" value="Matrilin_ccoil"/>
    <property type="match status" value="1"/>
</dbReference>
<dbReference type="SMART" id="SM00327">
    <property type="entry name" value="VWA"/>
    <property type="match status" value="1"/>
</dbReference>
<dbReference type="SUPFAM" id="SSF58002">
    <property type="entry name" value="Chicken cartilage matrix protein"/>
    <property type="match status" value="1"/>
</dbReference>
<dbReference type="SUPFAM" id="SSF57196">
    <property type="entry name" value="EGF/Laminin"/>
    <property type="match status" value="1"/>
</dbReference>
<dbReference type="SUPFAM" id="SSF57184">
    <property type="entry name" value="Growth factor receptor domain"/>
    <property type="match status" value="1"/>
</dbReference>
<dbReference type="SUPFAM" id="SSF53300">
    <property type="entry name" value="vWA-like"/>
    <property type="match status" value="1"/>
</dbReference>
<dbReference type="PROSITE" id="PS01186">
    <property type="entry name" value="EGF_2"/>
    <property type="match status" value="4"/>
</dbReference>
<dbReference type="PROSITE" id="PS50234">
    <property type="entry name" value="VWFA"/>
    <property type="match status" value="1"/>
</dbReference>
<protein>
    <recommendedName>
        <fullName>Matrilin-3</fullName>
    </recommendedName>
</protein>
<accession>O42401</accession>
<proteinExistence type="evidence at transcript level"/>
<organism>
    <name type="scientific">Gallus gallus</name>
    <name type="common">Chicken</name>
    <dbReference type="NCBI Taxonomy" id="9031"/>
    <lineage>
        <taxon>Eukaryota</taxon>
        <taxon>Metazoa</taxon>
        <taxon>Chordata</taxon>
        <taxon>Craniata</taxon>
        <taxon>Vertebrata</taxon>
        <taxon>Euteleostomi</taxon>
        <taxon>Archelosauria</taxon>
        <taxon>Archosauria</taxon>
        <taxon>Dinosauria</taxon>
        <taxon>Saurischia</taxon>
        <taxon>Theropoda</taxon>
        <taxon>Coelurosauria</taxon>
        <taxon>Aves</taxon>
        <taxon>Neognathae</taxon>
        <taxon>Galloanserae</taxon>
        <taxon>Galliformes</taxon>
        <taxon>Phasianidae</taxon>
        <taxon>Phasianinae</taxon>
        <taxon>Gallus</taxon>
    </lineage>
</organism>
<keyword id="KW-0175">Coiled coil</keyword>
<keyword id="KW-1015">Disulfide bond</keyword>
<keyword id="KW-0245">EGF-like domain</keyword>
<keyword id="KW-0325">Glycoprotein</keyword>
<keyword id="KW-1185">Reference proteome</keyword>
<keyword id="KW-0677">Repeat</keyword>
<keyword id="KW-0964">Secreted</keyword>
<keyword id="KW-0732">Signal</keyword>
<comment type="function">
    <text>Major component of the extracellular matrix of cartilage and may play a role in the formation of extracellular filamentous networks.</text>
</comment>
<comment type="subunit">
    <text evidence="1">Can form homooligomers (monomers, dimers, trimers and tetramers) and heterooligomers with matrilin-1.</text>
</comment>
<comment type="subcellular location">
    <subcellularLocation>
        <location>Secreted</location>
    </subcellularLocation>
</comment>
<comment type="tissue specificity">
    <text>Expression is restricted to cartilaginous tissues.</text>
</comment>